<dbReference type="EC" id="3.1.26.3" evidence="1"/>
<dbReference type="EMBL" id="CP000115">
    <property type="protein sequence ID" value="ABA05178.1"/>
    <property type="molecule type" value="Genomic_DNA"/>
</dbReference>
<dbReference type="RefSeq" id="WP_011315174.1">
    <property type="nucleotide sequence ID" value="NC_007406.1"/>
</dbReference>
<dbReference type="SMR" id="Q3SRB3"/>
<dbReference type="STRING" id="323098.Nwi_1918"/>
<dbReference type="KEGG" id="nwi:Nwi_1918"/>
<dbReference type="eggNOG" id="COG0571">
    <property type="taxonomic scope" value="Bacteria"/>
</dbReference>
<dbReference type="HOGENOM" id="CLU_000907_1_1_5"/>
<dbReference type="OrthoDB" id="9805026at2"/>
<dbReference type="Proteomes" id="UP000002531">
    <property type="component" value="Chromosome"/>
</dbReference>
<dbReference type="GO" id="GO:0005737">
    <property type="term" value="C:cytoplasm"/>
    <property type="evidence" value="ECO:0007669"/>
    <property type="project" value="UniProtKB-SubCell"/>
</dbReference>
<dbReference type="GO" id="GO:0003725">
    <property type="term" value="F:double-stranded RNA binding"/>
    <property type="evidence" value="ECO:0007669"/>
    <property type="project" value="TreeGrafter"/>
</dbReference>
<dbReference type="GO" id="GO:0046872">
    <property type="term" value="F:metal ion binding"/>
    <property type="evidence" value="ECO:0007669"/>
    <property type="project" value="UniProtKB-KW"/>
</dbReference>
<dbReference type="GO" id="GO:0004525">
    <property type="term" value="F:ribonuclease III activity"/>
    <property type="evidence" value="ECO:0007669"/>
    <property type="project" value="UniProtKB-UniRule"/>
</dbReference>
<dbReference type="GO" id="GO:0019843">
    <property type="term" value="F:rRNA binding"/>
    <property type="evidence" value="ECO:0007669"/>
    <property type="project" value="UniProtKB-KW"/>
</dbReference>
<dbReference type="GO" id="GO:0006397">
    <property type="term" value="P:mRNA processing"/>
    <property type="evidence" value="ECO:0007669"/>
    <property type="project" value="UniProtKB-UniRule"/>
</dbReference>
<dbReference type="GO" id="GO:0010468">
    <property type="term" value="P:regulation of gene expression"/>
    <property type="evidence" value="ECO:0007669"/>
    <property type="project" value="TreeGrafter"/>
</dbReference>
<dbReference type="GO" id="GO:0006364">
    <property type="term" value="P:rRNA processing"/>
    <property type="evidence" value="ECO:0007669"/>
    <property type="project" value="UniProtKB-UniRule"/>
</dbReference>
<dbReference type="GO" id="GO:0008033">
    <property type="term" value="P:tRNA processing"/>
    <property type="evidence" value="ECO:0007669"/>
    <property type="project" value="UniProtKB-KW"/>
</dbReference>
<dbReference type="CDD" id="cd10845">
    <property type="entry name" value="DSRM_RNAse_III_family"/>
    <property type="match status" value="1"/>
</dbReference>
<dbReference type="CDD" id="cd00593">
    <property type="entry name" value="RIBOc"/>
    <property type="match status" value="1"/>
</dbReference>
<dbReference type="FunFam" id="1.10.1520.10:FF:000001">
    <property type="entry name" value="Ribonuclease 3"/>
    <property type="match status" value="1"/>
</dbReference>
<dbReference type="FunFam" id="3.30.160.20:FF:000003">
    <property type="entry name" value="Ribonuclease 3"/>
    <property type="match status" value="1"/>
</dbReference>
<dbReference type="Gene3D" id="3.30.160.20">
    <property type="match status" value="1"/>
</dbReference>
<dbReference type="Gene3D" id="1.10.1520.10">
    <property type="entry name" value="Ribonuclease III domain"/>
    <property type="match status" value="1"/>
</dbReference>
<dbReference type="HAMAP" id="MF_00104">
    <property type="entry name" value="RNase_III"/>
    <property type="match status" value="1"/>
</dbReference>
<dbReference type="InterPro" id="IPR014720">
    <property type="entry name" value="dsRBD_dom"/>
</dbReference>
<dbReference type="InterPro" id="IPR011907">
    <property type="entry name" value="RNase_III"/>
</dbReference>
<dbReference type="InterPro" id="IPR000999">
    <property type="entry name" value="RNase_III_dom"/>
</dbReference>
<dbReference type="InterPro" id="IPR036389">
    <property type="entry name" value="RNase_III_sf"/>
</dbReference>
<dbReference type="NCBIfam" id="TIGR02191">
    <property type="entry name" value="RNaseIII"/>
    <property type="match status" value="1"/>
</dbReference>
<dbReference type="PANTHER" id="PTHR11207:SF0">
    <property type="entry name" value="RIBONUCLEASE 3"/>
    <property type="match status" value="1"/>
</dbReference>
<dbReference type="PANTHER" id="PTHR11207">
    <property type="entry name" value="RIBONUCLEASE III"/>
    <property type="match status" value="1"/>
</dbReference>
<dbReference type="Pfam" id="PF00035">
    <property type="entry name" value="dsrm"/>
    <property type="match status" value="1"/>
</dbReference>
<dbReference type="Pfam" id="PF14622">
    <property type="entry name" value="Ribonucleas_3_3"/>
    <property type="match status" value="1"/>
</dbReference>
<dbReference type="SMART" id="SM00358">
    <property type="entry name" value="DSRM"/>
    <property type="match status" value="1"/>
</dbReference>
<dbReference type="SMART" id="SM00535">
    <property type="entry name" value="RIBOc"/>
    <property type="match status" value="1"/>
</dbReference>
<dbReference type="SUPFAM" id="SSF54768">
    <property type="entry name" value="dsRNA-binding domain-like"/>
    <property type="match status" value="1"/>
</dbReference>
<dbReference type="SUPFAM" id="SSF69065">
    <property type="entry name" value="RNase III domain-like"/>
    <property type="match status" value="1"/>
</dbReference>
<dbReference type="PROSITE" id="PS50137">
    <property type="entry name" value="DS_RBD"/>
    <property type="match status" value="1"/>
</dbReference>
<dbReference type="PROSITE" id="PS00517">
    <property type="entry name" value="RNASE_3_1"/>
    <property type="match status" value="1"/>
</dbReference>
<dbReference type="PROSITE" id="PS50142">
    <property type="entry name" value="RNASE_3_2"/>
    <property type="match status" value="1"/>
</dbReference>
<accession>Q3SRB3</accession>
<keyword id="KW-0963">Cytoplasm</keyword>
<keyword id="KW-0255">Endonuclease</keyword>
<keyword id="KW-0378">Hydrolase</keyword>
<keyword id="KW-0460">Magnesium</keyword>
<keyword id="KW-0479">Metal-binding</keyword>
<keyword id="KW-0507">mRNA processing</keyword>
<keyword id="KW-0540">Nuclease</keyword>
<keyword id="KW-1185">Reference proteome</keyword>
<keyword id="KW-0694">RNA-binding</keyword>
<keyword id="KW-0698">rRNA processing</keyword>
<keyword id="KW-0699">rRNA-binding</keyword>
<keyword id="KW-0819">tRNA processing</keyword>
<protein>
    <recommendedName>
        <fullName evidence="1">Ribonuclease 3</fullName>
        <ecNumber evidence="1">3.1.26.3</ecNumber>
    </recommendedName>
    <alternativeName>
        <fullName evidence="1">Ribonuclease III</fullName>
        <shortName evidence="1">RNase III</shortName>
    </alternativeName>
</protein>
<feature type="chain" id="PRO_0000228554" description="Ribonuclease 3">
    <location>
        <begin position="1"/>
        <end position="266"/>
    </location>
</feature>
<feature type="domain" description="RNase III" evidence="1">
    <location>
        <begin position="43"/>
        <end position="171"/>
    </location>
</feature>
<feature type="domain" description="DRBM" evidence="1">
    <location>
        <begin position="196"/>
        <end position="265"/>
    </location>
</feature>
<feature type="region of interest" description="Disordered" evidence="2">
    <location>
        <begin position="1"/>
        <end position="35"/>
    </location>
</feature>
<feature type="active site" evidence="1">
    <location>
        <position position="88"/>
    </location>
</feature>
<feature type="active site" evidence="1">
    <location>
        <position position="160"/>
    </location>
</feature>
<feature type="binding site" evidence="1">
    <location>
        <position position="84"/>
    </location>
    <ligand>
        <name>Mg(2+)</name>
        <dbReference type="ChEBI" id="CHEBI:18420"/>
    </ligand>
</feature>
<feature type="binding site" evidence="1">
    <location>
        <position position="157"/>
    </location>
    <ligand>
        <name>Mg(2+)</name>
        <dbReference type="ChEBI" id="CHEBI:18420"/>
    </ligand>
</feature>
<feature type="binding site" evidence="1">
    <location>
        <position position="160"/>
    </location>
    <ligand>
        <name>Mg(2+)</name>
        <dbReference type="ChEBI" id="CHEBI:18420"/>
    </ligand>
</feature>
<proteinExistence type="inferred from homology"/>
<name>RNC_NITWN</name>
<comment type="function">
    <text evidence="1">Digests double-stranded RNA. Involved in the processing of primary rRNA transcript to yield the immediate precursors to the large and small rRNAs (23S and 16S). Processes some mRNAs, and tRNAs when they are encoded in the rRNA operon. Processes pre-crRNA and tracrRNA of type II CRISPR loci if present in the organism.</text>
</comment>
<comment type="catalytic activity">
    <reaction evidence="1">
        <text>Endonucleolytic cleavage to 5'-phosphomonoester.</text>
        <dbReference type="EC" id="3.1.26.3"/>
    </reaction>
</comment>
<comment type="cofactor">
    <cofactor evidence="1">
        <name>Mg(2+)</name>
        <dbReference type="ChEBI" id="CHEBI:18420"/>
    </cofactor>
</comment>
<comment type="subunit">
    <text evidence="1">Homodimer.</text>
</comment>
<comment type="subcellular location">
    <subcellularLocation>
        <location evidence="1">Cytoplasm</location>
    </subcellularLocation>
</comment>
<comment type="similarity">
    <text evidence="1">Belongs to the ribonuclease III family.</text>
</comment>
<sequence length="266" mass="28671">MMDESADIKPVPTSEDVAAPSGTEPVAPAPKKKRARTSTKAIMAAIEQRLGHTFADISLLTTAFTHVSALKSSRGRCDSYQRLEFLGDHVLGLVVSDMLYRAFPKADEGELSKRLADLVRKETCIDVAKSLDLQEGVKLGAVGAGAGARLRRSVLGDICEAVIGAVYLDGGYAAAAAFVERNWLERMRKPVRPLRDPKTVLQEWAQGKGLPTPVYREVERTGPHHDPRFRVAVELPGLESSEGIGGSKRAAEKAAASAMIVREGVK</sequence>
<reference key="1">
    <citation type="journal article" date="2006" name="Appl. Environ. Microbiol.">
        <title>Genome sequence of the chemolithoautotrophic nitrite-oxidizing bacterium Nitrobacter winogradskyi Nb-255.</title>
        <authorList>
            <person name="Starkenburg S.R."/>
            <person name="Chain P.S.G."/>
            <person name="Sayavedra-Soto L.A."/>
            <person name="Hauser L."/>
            <person name="Land M.L."/>
            <person name="Larimer F.W."/>
            <person name="Malfatti S.A."/>
            <person name="Klotz M.G."/>
            <person name="Bottomley P.J."/>
            <person name="Arp D.J."/>
            <person name="Hickey W.J."/>
        </authorList>
    </citation>
    <scope>NUCLEOTIDE SEQUENCE [LARGE SCALE GENOMIC DNA]</scope>
    <source>
        <strain>ATCC 25391 / DSM 10237 / CIP 104748 / NCIMB 11846 / Nb-255</strain>
    </source>
</reference>
<organism>
    <name type="scientific">Nitrobacter winogradskyi (strain ATCC 25391 / DSM 10237 / CIP 104748 / NCIMB 11846 / Nb-255)</name>
    <dbReference type="NCBI Taxonomy" id="323098"/>
    <lineage>
        <taxon>Bacteria</taxon>
        <taxon>Pseudomonadati</taxon>
        <taxon>Pseudomonadota</taxon>
        <taxon>Alphaproteobacteria</taxon>
        <taxon>Hyphomicrobiales</taxon>
        <taxon>Nitrobacteraceae</taxon>
        <taxon>Nitrobacter</taxon>
    </lineage>
</organism>
<gene>
    <name evidence="1" type="primary">rnc</name>
    <name type="ordered locus">Nwi_1918</name>
</gene>
<evidence type="ECO:0000255" key="1">
    <source>
        <dbReference type="HAMAP-Rule" id="MF_00104"/>
    </source>
</evidence>
<evidence type="ECO:0000256" key="2">
    <source>
        <dbReference type="SAM" id="MobiDB-lite"/>
    </source>
</evidence>